<accession>Q5HW85</accession>
<name>NUSB_CAMJR</name>
<protein>
    <recommendedName>
        <fullName evidence="1">Transcription antitermination protein NusB</fullName>
    </recommendedName>
    <alternativeName>
        <fullName evidence="1">Antitermination factor NusB</fullName>
    </alternativeName>
</protein>
<comment type="function">
    <text evidence="1">Involved in transcription antitermination. Required for transcription of ribosomal RNA (rRNA) genes. Binds specifically to the boxA antiterminator sequence of the ribosomal RNA (rrn) operons.</text>
</comment>
<comment type="similarity">
    <text evidence="1">Belongs to the NusB family.</text>
</comment>
<organism>
    <name type="scientific">Campylobacter jejuni (strain RM1221)</name>
    <dbReference type="NCBI Taxonomy" id="195099"/>
    <lineage>
        <taxon>Bacteria</taxon>
        <taxon>Pseudomonadati</taxon>
        <taxon>Campylobacterota</taxon>
        <taxon>Epsilonproteobacteria</taxon>
        <taxon>Campylobacterales</taxon>
        <taxon>Campylobacteraceae</taxon>
        <taxon>Campylobacter</taxon>
    </lineage>
</organism>
<reference key="1">
    <citation type="journal article" date="2005" name="PLoS Biol.">
        <title>Major structural differences and novel potential virulence mechanisms from the genomes of multiple Campylobacter species.</title>
        <authorList>
            <person name="Fouts D.E."/>
            <person name="Mongodin E.F."/>
            <person name="Mandrell R.E."/>
            <person name="Miller W.G."/>
            <person name="Rasko D.A."/>
            <person name="Ravel J."/>
            <person name="Brinkac L.M."/>
            <person name="DeBoy R.T."/>
            <person name="Parker C.T."/>
            <person name="Daugherty S.C."/>
            <person name="Dodson R.J."/>
            <person name="Durkin A.S."/>
            <person name="Madupu R."/>
            <person name="Sullivan S.A."/>
            <person name="Shetty J.U."/>
            <person name="Ayodeji M.A."/>
            <person name="Shvartsbeyn A."/>
            <person name="Schatz M.C."/>
            <person name="Badger J.H."/>
            <person name="Fraser C.M."/>
            <person name="Nelson K.E."/>
        </authorList>
    </citation>
    <scope>NUCLEOTIDE SEQUENCE [LARGE SCALE GENOMIC DNA]</scope>
    <source>
        <strain>RM1221</strain>
    </source>
</reference>
<dbReference type="EMBL" id="CP000025">
    <property type="protein sequence ID" value="AAW35020.1"/>
    <property type="molecule type" value="Genomic_DNA"/>
</dbReference>
<dbReference type="RefSeq" id="WP_002824771.1">
    <property type="nucleotide sequence ID" value="NC_003912.7"/>
</dbReference>
<dbReference type="SMR" id="Q5HW85"/>
<dbReference type="KEGG" id="cjr:CJE0431"/>
<dbReference type="HOGENOM" id="CLU_087843_3_3_7"/>
<dbReference type="GO" id="GO:0005829">
    <property type="term" value="C:cytosol"/>
    <property type="evidence" value="ECO:0007669"/>
    <property type="project" value="TreeGrafter"/>
</dbReference>
<dbReference type="GO" id="GO:0003723">
    <property type="term" value="F:RNA binding"/>
    <property type="evidence" value="ECO:0007669"/>
    <property type="project" value="UniProtKB-UniRule"/>
</dbReference>
<dbReference type="GO" id="GO:0006353">
    <property type="term" value="P:DNA-templated transcription termination"/>
    <property type="evidence" value="ECO:0007669"/>
    <property type="project" value="UniProtKB-UniRule"/>
</dbReference>
<dbReference type="GO" id="GO:0031564">
    <property type="term" value="P:transcription antitermination"/>
    <property type="evidence" value="ECO:0007669"/>
    <property type="project" value="UniProtKB-KW"/>
</dbReference>
<dbReference type="Gene3D" id="1.10.940.10">
    <property type="entry name" value="NusB-like"/>
    <property type="match status" value="1"/>
</dbReference>
<dbReference type="HAMAP" id="MF_00073">
    <property type="entry name" value="NusB"/>
    <property type="match status" value="1"/>
</dbReference>
<dbReference type="InterPro" id="IPR035926">
    <property type="entry name" value="NusB-like_sf"/>
</dbReference>
<dbReference type="InterPro" id="IPR011605">
    <property type="entry name" value="NusB_fam"/>
</dbReference>
<dbReference type="InterPro" id="IPR006027">
    <property type="entry name" value="NusB_RsmB_TIM44"/>
</dbReference>
<dbReference type="NCBIfam" id="TIGR01951">
    <property type="entry name" value="nusB"/>
    <property type="match status" value="1"/>
</dbReference>
<dbReference type="PANTHER" id="PTHR11078:SF3">
    <property type="entry name" value="ANTITERMINATION NUSB DOMAIN-CONTAINING PROTEIN"/>
    <property type="match status" value="1"/>
</dbReference>
<dbReference type="PANTHER" id="PTHR11078">
    <property type="entry name" value="N UTILIZATION SUBSTANCE PROTEIN B-RELATED"/>
    <property type="match status" value="1"/>
</dbReference>
<dbReference type="Pfam" id="PF01029">
    <property type="entry name" value="NusB"/>
    <property type="match status" value="1"/>
</dbReference>
<dbReference type="SUPFAM" id="SSF48013">
    <property type="entry name" value="NusB-like"/>
    <property type="match status" value="1"/>
</dbReference>
<evidence type="ECO:0000255" key="1">
    <source>
        <dbReference type="HAMAP-Rule" id="MF_00073"/>
    </source>
</evidence>
<proteinExistence type="inferred from homology"/>
<keyword id="KW-0694">RNA-binding</keyword>
<keyword id="KW-0804">Transcription</keyword>
<keyword id="KW-0889">Transcription antitermination</keyword>
<keyword id="KW-0805">Transcription regulation</keyword>
<feature type="chain" id="PRO_0000176521" description="Transcription antitermination protein NusB">
    <location>
        <begin position="1"/>
        <end position="132"/>
    </location>
</feature>
<gene>
    <name evidence="1" type="primary">nusB</name>
    <name type="ordered locus">CJE0431</name>
</gene>
<sequence length="132" mass="14930">MATRHQVRQSVISLLYAFELNSQNNVFVDEILDEKKIRNEQKNFTLNLYNGILDNLNNIDETLNSFLNDNQITALGHVERAILRLGAYELLFTDTPSAIVINEAIELAKELANDNSPKFINGVLDALIKAKK</sequence>